<organismHost>
    <name type="scientific">Homo sapiens</name>
    <name type="common">Human</name>
    <dbReference type="NCBI Taxonomy" id="9606"/>
</organismHost>
<name>NS2_HRSV</name>
<protein>
    <recommendedName>
        <fullName>Non-structural protein 2</fullName>
        <shortName>NS2</shortName>
    </recommendedName>
    <alternativeName>
        <fullName>Non-structural protein 1B</fullName>
    </alternativeName>
</protein>
<evidence type="ECO:0000250" key="1">
    <source>
        <dbReference type="UniProtKB" id="P04543"/>
    </source>
</evidence>
<evidence type="ECO:0000305" key="2"/>
<evidence type="ECO:0007829" key="3">
    <source>
        <dbReference type="PDB" id="7LDK"/>
    </source>
</evidence>
<organism>
    <name type="scientific">Human respiratory syncytial virus</name>
    <dbReference type="NCBI Taxonomy" id="11250"/>
    <lineage>
        <taxon>Viruses</taxon>
        <taxon>Riboviria</taxon>
        <taxon>Orthornavirae</taxon>
        <taxon>Negarnaviricota</taxon>
        <taxon>Haploviricotina</taxon>
        <taxon>Monjiviricetes</taxon>
        <taxon>Mononegavirales</taxon>
        <taxon>Pneumoviridae</taxon>
        <taxon>Orthopneumovirus</taxon>
        <taxon>Orthopneumovirus hominis</taxon>
    </lineage>
</organism>
<proteinExistence type="evidence at protein level"/>
<accession>Q86305</accession>
<accession>Q4KRX0</accession>
<gene>
    <name type="primary">1B</name>
    <name type="synonym">NS2</name>
</gene>
<dbReference type="EMBL" id="U35029">
    <property type="protein sequence ID" value="AAA79090.1"/>
    <property type="molecule type" value="mRNA"/>
</dbReference>
<dbReference type="EMBL" id="AY911262">
    <property type="protein sequence ID" value="AAX23988.1"/>
    <property type="molecule type" value="Genomic_RNA"/>
</dbReference>
<dbReference type="EMBL" id="MT994243">
    <property type="protein sequence ID" value="QXO84947.1"/>
    <property type="molecule type" value="Genomic_RNA"/>
</dbReference>
<dbReference type="EMBL" id="KF713490">
    <property type="protein sequence ID" value="AHC94757.1"/>
    <property type="molecule type" value="Viral_cRNA"/>
</dbReference>
<dbReference type="EMBL" id="KF713491">
    <property type="protein sequence ID" value="AHC94768.1"/>
    <property type="molecule type" value="Viral_cRNA"/>
</dbReference>
<dbReference type="EMBL" id="KF713492">
    <property type="protein sequence ID" value="AHC94780.1"/>
    <property type="molecule type" value="Viral_cRNA"/>
</dbReference>
<dbReference type="EMBL" id="KP258707">
    <property type="protein sequence ID" value="AIZ95612.1"/>
    <property type="molecule type" value="Viral_cRNA"/>
</dbReference>
<dbReference type="EMBL" id="KU316170">
    <property type="protein sequence ID" value="AMA67212.1"/>
    <property type="molecule type" value="Viral_cRNA"/>
</dbReference>
<dbReference type="EMBL" id="KU707921">
    <property type="protein sequence ID" value="AMQ35397.1"/>
    <property type="molecule type" value="Genomic_RNA"/>
</dbReference>
<dbReference type="EMBL" id="KX348546">
    <property type="protein sequence ID" value="API65184.1"/>
    <property type="molecule type" value="Genomic_RNA"/>
</dbReference>
<dbReference type="EMBL" id="MK810782">
    <property type="protein sequence ID" value="QFX69106.1"/>
    <property type="molecule type" value="Genomic_RNA"/>
</dbReference>
<dbReference type="EMBL" id="MK816924">
    <property type="protein sequence ID" value="QFX69117.1"/>
    <property type="molecule type" value="Genomic_RNA"/>
</dbReference>
<dbReference type="EMBL" id="MW039343">
    <property type="protein sequence ID" value="QPB74357.1"/>
    <property type="molecule type" value="Viral_cRNA"/>
</dbReference>
<dbReference type="EMBL" id="MT994242">
    <property type="protein sequence ID" value="QXO84936.1"/>
    <property type="molecule type" value="Genomic_RNA"/>
</dbReference>
<dbReference type="PDB" id="7LDK">
    <property type="method" value="X-ray"/>
    <property type="resolution" value="2.82 A"/>
    <property type="chains" value="A/B/C=1-124"/>
</dbReference>
<dbReference type="PDBsum" id="7LDK"/>
<dbReference type="SMR" id="Q86305"/>
<dbReference type="Proteomes" id="UP000103294">
    <property type="component" value="Genome"/>
</dbReference>
<dbReference type="Proteomes" id="UP000104732">
    <property type="component" value="Genome"/>
</dbReference>
<dbReference type="Proteomes" id="UP000119304">
    <property type="component" value="Genome"/>
</dbReference>
<dbReference type="Proteomes" id="UP000130886">
    <property type="component" value="Genome"/>
</dbReference>
<dbReference type="Proteomes" id="UP000138938">
    <property type="component" value="Genome"/>
</dbReference>
<dbReference type="Proteomes" id="UP000158141">
    <property type="component" value="Genome"/>
</dbReference>
<dbReference type="Proteomes" id="UP000163705">
    <property type="component" value="Genome"/>
</dbReference>
<dbReference type="GO" id="GO:0033650">
    <property type="term" value="C:host cell mitochondrion"/>
    <property type="evidence" value="ECO:0007669"/>
    <property type="project" value="UniProtKB-SubCell"/>
</dbReference>
<dbReference type="GO" id="GO:0052150">
    <property type="term" value="P:symbiont-mediated perturbation of host apoptosis"/>
    <property type="evidence" value="ECO:0007669"/>
    <property type="project" value="UniProtKB-KW"/>
</dbReference>
<dbReference type="GO" id="GO:0039548">
    <property type="term" value="P:symbiont-mediated suppression of host cytoplasmic pattern recognition receptor signaling pathway via inhibition of IRF3 activity"/>
    <property type="evidence" value="ECO:0007669"/>
    <property type="project" value="UniProtKB-KW"/>
</dbReference>
<dbReference type="GO" id="GO:0039557">
    <property type="term" value="P:symbiont-mediated suppression of host cytoplasmic pattern recognition receptor signaling pathway via inhibition of IRF7 activity"/>
    <property type="evidence" value="ECO:0007669"/>
    <property type="project" value="UniProtKB-KW"/>
</dbReference>
<dbReference type="GO" id="GO:0039540">
    <property type="term" value="P:symbiont-mediated suppression of host cytoplasmic pattern recognition receptor signaling pathway via inhibition of RIG-I activity"/>
    <property type="evidence" value="ECO:0007669"/>
    <property type="project" value="UniProtKB-KW"/>
</dbReference>
<dbReference type="GO" id="GO:0039723">
    <property type="term" value="P:symbiont-mediated suppression of host cytoplasmic pattern recognition receptor signaling pathway via inhibition of TBK1 activity"/>
    <property type="evidence" value="ECO:0007669"/>
    <property type="project" value="UniProtKB-KW"/>
</dbReference>
<dbReference type="GO" id="GO:0039564">
    <property type="term" value="P:symbiont-mediated suppression of host JAK-STAT cascade via inhibition of STAT2 activity"/>
    <property type="evidence" value="ECO:0007669"/>
    <property type="project" value="UniProtKB-KW"/>
</dbReference>
<dbReference type="GO" id="GO:0039722">
    <property type="term" value="P:symbiont-mediated suppression of host toll-like receptor signaling pathway"/>
    <property type="evidence" value="ECO:0007669"/>
    <property type="project" value="UniProtKB-KW"/>
</dbReference>
<dbReference type="GO" id="GO:0039502">
    <property type="term" value="P:symbiont-mediated suppression of host type I interferon-mediated signaling pathway"/>
    <property type="evidence" value="ECO:0007669"/>
    <property type="project" value="UniProtKB-KW"/>
</dbReference>
<dbReference type="InterPro" id="IPR004336">
    <property type="entry name" value="RSV_NS2"/>
</dbReference>
<dbReference type="Pfam" id="PF03113">
    <property type="entry name" value="RSV_NS2"/>
    <property type="match status" value="1"/>
</dbReference>
<feature type="chain" id="PRO_0000142791" description="Non-structural protein 2">
    <location>
        <begin position="1"/>
        <end position="124"/>
    </location>
</feature>
<feature type="short sequence motif" description="DLNP; interaction with MAP1B" evidence="1">
    <location>
        <begin position="121"/>
        <end position="124"/>
    </location>
</feature>
<feature type="helix" evidence="3">
    <location>
        <begin position="23"/>
        <end position="34"/>
    </location>
</feature>
<feature type="helix" evidence="3">
    <location>
        <begin position="37"/>
        <end position="49"/>
    </location>
</feature>
<feature type="helix" evidence="3">
    <location>
        <begin position="54"/>
        <end position="88"/>
    </location>
</feature>
<feature type="strand" evidence="3">
    <location>
        <begin position="93"/>
        <end position="99"/>
    </location>
</feature>
<feature type="strand" evidence="3">
    <location>
        <begin position="102"/>
        <end position="109"/>
    </location>
</feature>
<feature type="strand" evidence="3">
    <location>
        <begin position="111"/>
        <end position="114"/>
    </location>
</feature>
<feature type="helix" evidence="3">
    <location>
        <begin position="119"/>
        <end position="121"/>
    </location>
</feature>
<keyword id="KW-0002">3D-structure</keyword>
<keyword id="KW-1045">Host mitochondrion</keyword>
<keyword id="KW-0945">Host-virus interaction</keyword>
<keyword id="KW-1090">Inhibition of host innate immune response by virus</keyword>
<keyword id="KW-1114">Inhibition of host interferon signaling pathway by virus</keyword>
<keyword id="KW-1092">Inhibition of host IRF3 by virus</keyword>
<keyword id="KW-1093">Inhibition of host IRF7 by virus</keyword>
<keyword id="KW-1088">Inhibition of host RIG-I by virus</keyword>
<keyword id="KW-1113">Inhibition of host RLR pathway by virus</keyword>
<keyword id="KW-1106">Inhibition of host STAT2 by virus</keyword>
<keyword id="KW-1223">Inhibition of host TBK1 by virus</keyword>
<keyword id="KW-1225">Inhibition of host TLR pathway by virus</keyword>
<keyword id="KW-0922">Interferon antiviral system evasion</keyword>
<keyword id="KW-1119">Modulation of host cell apoptosis by virus</keyword>
<keyword id="KW-0899">Viral immunoevasion</keyword>
<sequence length="124" mass="14705">MDTTHNDTTPQRLMITDMRPLSLETTITSLTRDIITHRFIYLINHECIVRKLDERQATFTFLVNYEMKLLHKVGSTKYKKYTEYNTKYGTFPMPIFINHDGFLECIGIKPTKHTPIIYKYDLNP</sequence>
<reference key="1">
    <citation type="submission" date="1995-08" db="EMBL/GenBank/DDBJ databases">
        <authorList>
            <person name="Mazumder B."/>
            <person name="Dupuy L.C."/>
            <person name="McLean T."/>
            <person name="Barik S."/>
        </authorList>
    </citation>
    <scope>NUCLEOTIDE SEQUENCE [MRNA]</scope>
</reference>
<reference key="2">
    <citation type="journal article" date="2005" name="J. Virol.">
        <title>Respiratory syncytial virus nonstructural proteins NS1 and NS2 mediate inhibition of Stat2 expression and alpha/beta interferon responsiveness.</title>
        <authorList>
            <person name="Lo M.S."/>
            <person name="Brazas R.M."/>
            <person name="Holtzman M.J."/>
        </authorList>
    </citation>
    <scope>NUCLEOTIDE SEQUENCE [LARGE SCALE GENOMIC DNA]</scope>
    <source>
        <strain>ATCC VR-26</strain>
    </source>
</reference>
<reference key="3">
    <citation type="journal article" date="2019" name="Sci. Rep.">
        <title>The Interactome analysis of the Respiratory Syncytial Virus protein M2-1 suggests a new role in viral mRNA metabolism post-transcription.</title>
        <authorList>
            <person name="Bouillier C."/>
            <person name="Cosentino G."/>
            <person name="Leger T."/>
            <person name="Rincheval V."/>
            <person name="Richard C.A."/>
            <person name="Desquesnes A."/>
            <person name="Sitterlin D."/>
            <person name="Blouquit-Laye S."/>
            <person name="Eleouet J.F."/>
            <person name="Gault E."/>
            <person name="Rameix-Welti M.A."/>
        </authorList>
    </citation>
    <scope>NUCLEOTIDE SEQUENCE [GENOMIC RNA]</scope>
</reference>
<reference key="4">
    <citation type="journal article" date="2021" name="Nature">
        <title>A condensate-hardening drug blocks RSV replication in vivo.</title>
        <authorList>
            <person name="Risso-Ballester J."/>
            <person name="Galloux M."/>
            <person name="Cao J."/>
            <person name="Le Goffic R."/>
            <person name="Hontonnou F."/>
            <person name="Jobart-Malfait A."/>
            <person name="Desquesnes A."/>
            <person name="Sake S.M."/>
            <person name="Haid S."/>
            <person name="Du M."/>
            <person name="Zhang X."/>
            <person name="Zhang H."/>
            <person name="Wang Z."/>
            <person name="Rincheval V."/>
            <person name="Zhang Y."/>
            <person name="Pietschmann T."/>
            <person name="Eleouet J.F."/>
            <person name="Rameix-Welti M.A."/>
            <person name="Altmeyer R."/>
        </authorList>
    </citation>
    <scope>NUCLEOTIDE SEQUENCE [GENOMIC RNA]</scope>
</reference>
<reference key="5">
    <citation type="journal article" date="2019" name="PLoS Pathog.">
        <title>Respiratory syncytial virus nonstructural proteins 1 and 2: Exceptional disrupters of innate immune responses.</title>
        <authorList>
            <person name="Sedeyn K."/>
            <person name="Schepens B."/>
            <person name="Saelens X."/>
        </authorList>
    </citation>
    <scope>REVIEW</scope>
</reference>
<reference key="6">
    <citation type="journal article" date="2020" name="Front. Cell. Infect. Microbiol.">
        <title>Respiratory Syncytial Virus's Non-structural Proteins: Masters of Interference.</title>
        <authorList>
            <person name="Thornhill E.M."/>
            <person name="Verhoeven D."/>
        </authorList>
    </citation>
    <scope>REVIEW</scope>
</reference>
<comment type="function">
    <text evidence="1">Plays a major role in antagonizing the type I IFN-mediated antiviral response. Acts cooperatively with NS1 to repress activation and nuclear translocation of host IFN-regulatory factor IRF3. Interacts with the host cytoplasmic sensor of viral nucleic acids RIGI and prevents the interaction with its downstream partner MAVS. Together with NS2, participates in the proteasomal degradation of host STAT2, IRF3, IRF7, TBK1 and RIGI through a NS-degradasome involving CUL2 and Elongin-C. The degradasome requires an intact mitochondrial MAVS. Induces host SOCS1 expression. Induces activation of NF-kappa-B. Suppresses premature apoptosis by an NF-kappa-B-dependent, interferon-independent mechanism promoting continued viral replication.</text>
</comment>
<comment type="subunit">
    <text evidence="1">Monomer (instable). Homomultimer. Heteromultimer with NS1. Interacts with host RIGI (via N-terminus); this interaction prevents host signaling pathway involved in interferon production. Interacts with host MAP1B/microtubule-associated protein 1B.</text>
</comment>
<comment type="subcellular location">
    <subcellularLocation>
        <location evidence="1">Host mitochondrion</location>
    </subcellularLocation>
    <text evidence="1">Most NS2 resides in the mitochondria as a heteromer with NS1.</text>
</comment>
<comment type="domain">
    <text evidence="1">The DNLP motif has IFN suppressive functions like binding to host MAP1B.</text>
</comment>
<comment type="similarity">
    <text evidence="2">Belongs to the pneumovirus non-structural protein 2 family.</text>
</comment>